<accession>Q7L4S7</accession>
<accession>Q9NWJ3</accession>
<gene>
    <name type="primary">ARMCX6</name>
</gene>
<protein>
    <recommendedName>
        <fullName>Protein ARMCX6</fullName>
    </recommendedName>
</protein>
<dbReference type="EMBL" id="AL121883">
    <property type="protein sequence ID" value="CAI42938.1"/>
    <property type="molecule type" value="Genomic_DNA"/>
</dbReference>
<dbReference type="EMBL" id="BC007677">
    <property type="protein sequence ID" value="AAH07677.2"/>
    <property type="molecule type" value="mRNA"/>
</dbReference>
<dbReference type="EMBL" id="AK000818">
    <property type="protein sequence ID" value="BAA91387.1"/>
    <property type="status" value="ALT_INIT"/>
    <property type="molecule type" value="mRNA"/>
</dbReference>
<dbReference type="CCDS" id="CCDS14488.1"/>
<dbReference type="RefSeq" id="NP_001009584.1">
    <property type="nucleotide sequence ID" value="NM_001009584.2"/>
</dbReference>
<dbReference type="RefSeq" id="NP_001171697.1">
    <property type="nucleotide sequence ID" value="NM_001184768.2"/>
</dbReference>
<dbReference type="RefSeq" id="NP_061880.2">
    <property type="nucleotide sequence ID" value="NM_019007.3"/>
</dbReference>
<dbReference type="BioGRID" id="119976">
    <property type="interactions" value="7"/>
</dbReference>
<dbReference type="FunCoup" id="Q7L4S7">
    <property type="interactions" value="128"/>
</dbReference>
<dbReference type="IntAct" id="Q7L4S7">
    <property type="interactions" value="4"/>
</dbReference>
<dbReference type="STRING" id="9606.ENSP00000444537"/>
<dbReference type="GlyGen" id="Q7L4S7">
    <property type="glycosylation" value="1 site"/>
</dbReference>
<dbReference type="iPTMnet" id="Q7L4S7"/>
<dbReference type="PhosphoSitePlus" id="Q7L4S7"/>
<dbReference type="BioMuta" id="ARMCX6"/>
<dbReference type="DMDM" id="74749890"/>
<dbReference type="MassIVE" id="Q7L4S7"/>
<dbReference type="PaxDb" id="9606-ENSP00000444537"/>
<dbReference type="PeptideAtlas" id="Q7L4S7"/>
<dbReference type="ProteomicsDB" id="68781"/>
<dbReference type="Pumba" id="Q7L4S7"/>
<dbReference type="Antibodypedia" id="14751">
    <property type="antibodies" value="113 antibodies from 21 providers"/>
</dbReference>
<dbReference type="DNASU" id="54470"/>
<dbReference type="Ensembl" id="ENST00000361910.9">
    <property type="protein sequence ID" value="ENSP00000354708.4"/>
    <property type="gene ID" value="ENSG00000198960.11"/>
</dbReference>
<dbReference type="Ensembl" id="ENST00000538627.5">
    <property type="protein sequence ID" value="ENSP00000440648.1"/>
    <property type="gene ID" value="ENSG00000198960.11"/>
</dbReference>
<dbReference type="Ensembl" id="ENST00000539247.5">
    <property type="protein sequence ID" value="ENSP00000444537.1"/>
    <property type="gene ID" value="ENSG00000198960.11"/>
</dbReference>
<dbReference type="GeneID" id="54470"/>
<dbReference type="KEGG" id="hsa:54470"/>
<dbReference type="MANE-Select" id="ENST00000361910.9">
    <property type="protein sequence ID" value="ENSP00000354708.4"/>
    <property type="RefSeq nucleotide sequence ID" value="NM_019007.4"/>
    <property type="RefSeq protein sequence ID" value="NP_061880.2"/>
</dbReference>
<dbReference type="UCSC" id="uc004ehx.4">
    <property type="organism name" value="human"/>
</dbReference>
<dbReference type="AGR" id="HGNC:26094"/>
<dbReference type="CTD" id="54470"/>
<dbReference type="GeneCards" id="ARMCX6"/>
<dbReference type="HGNC" id="HGNC:26094">
    <property type="gene designation" value="ARMCX6"/>
</dbReference>
<dbReference type="HPA" id="ENSG00000198960">
    <property type="expression patterns" value="Low tissue specificity"/>
</dbReference>
<dbReference type="MIM" id="301048">
    <property type="type" value="gene"/>
</dbReference>
<dbReference type="neXtProt" id="NX_Q7L4S7"/>
<dbReference type="OpenTargets" id="ENSG00000198960"/>
<dbReference type="PharmGKB" id="PA134869551"/>
<dbReference type="VEuPathDB" id="HostDB:ENSG00000198960"/>
<dbReference type="eggNOG" id="ENOG502RP3G">
    <property type="taxonomic scope" value="Eukaryota"/>
</dbReference>
<dbReference type="GeneTree" id="ENSGT00940000163042"/>
<dbReference type="HOGENOM" id="CLU_037187_0_1_1"/>
<dbReference type="InParanoid" id="Q7L4S7"/>
<dbReference type="OMA" id="FIQGKMW"/>
<dbReference type="OrthoDB" id="10017790at2759"/>
<dbReference type="PAN-GO" id="Q7L4S7">
    <property type="GO annotations" value="1 GO annotation based on evolutionary models"/>
</dbReference>
<dbReference type="PhylomeDB" id="Q7L4S7"/>
<dbReference type="TreeFam" id="TF335652"/>
<dbReference type="PathwayCommons" id="Q7L4S7"/>
<dbReference type="BioGRID-ORCS" id="54470">
    <property type="hits" value="34 hits in 771 CRISPR screens"/>
</dbReference>
<dbReference type="ChiTaRS" id="ARMCX6">
    <property type="organism name" value="human"/>
</dbReference>
<dbReference type="GeneWiki" id="ARMCX6"/>
<dbReference type="GenomeRNAi" id="54470"/>
<dbReference type="Pharos" id="Q7L4S7">
    <property type="development level" value="Tdark"/>
</dbReference>
<dbReference type="PRO" id="PR:Q7L4S7"/>
<dbReference type="Proteomes" id="UP000005640">
    <property type="component" value="Chromosome X"/>
</dbReference>
<dbReference type="RNAct" id="Q7L4S7">
    <property type="molecule type" value="protein"/>
</dbReference>
<dbReference type="Bgee" id="ENSG00000198960">
    <property type="expression patterns" value="Expressed in adrenal tissue and 103 other cell types or tissues"/>
</dbReference>
<dbReference type="GO" id="GO:0005741">
    <property type="term" value="C:mitochondrial outer membrane"/>
    <property type="evidence" value="ECO:0007669"/>
    <property type="project" value="UniProtKB-SubCell"/>
</dbReference>
<dbReference type="GO" id="GO:0005739">
    <property type="term" value="C:mitochondrion"/>
    <property type="evidence" value="ECO:0000318"/>
    <property type="project" value="GO_Central"/>
</dbReference>
<dbReference type="InterPro" id="IPR006911">
    <property type="entry name" value="ARM-rpt_dom"/>
</dbReference>
<dbReference type="InterPro" id="IPR051303">
    <property type="entry name" value="Armcx_regulator"/>
</dbReference>
<dbReference type="PANTHER" id="PTHR15712">
    <property type="entry name" value="ARMADILLO REPEAT CONTAINING PROTEIN"/>
    <property type="match status" value="1"/>
</dbReference>
<dbReference type="PANTHER" id="PTHR15712:SF6">
    <property type="entry name" value="PROTEIN ARMCX6"/>
    <property type="match status" value="1"/>
</dbReference>
<dbReference type="Pfam" id="PF04826">
    <property type="entry name" value="Arm_2"/>
    <property type="match status" value="1"/>
</dbReference>
<feature type="chain" id="PRO_0000191374" description="Protein ARMCX6">
    <location>
        <begin position="1"/>
        <end position="300"/>
    </location>
</feature>
<feature type="topological domain" description="Mitochondrial intermembrane" evidence="1">
    <location>
        <begin position="1"/>
        <end position="6"/>
    </location>
</feature>
<feature type="transmembrane region" description="Helical; Signal-anchor" evidence="3">
    <location>
        <begin position="7"/>
        <end position="27"/>
    </location>
</feature>
<feature type="topological domain" description="Cytoplasmic" evidence="1">
    <location>
        <begin position="28"/>
        <end position="300"/>
    </location>
</feature>
<feature type="region of interest" description="Mitochondrion outer membrane (MOM)-targeting sequence" evidence="5">
    <location>
        <begin position="1"/>
        <end position="6"/>
    </location>
</feature>
<feature type="region of interest" description="Mitochondrion outer membrane (MOM)-targeting sequence" evidence="5">
    <location>
        <begin position="26"/>
        <end position="36"/>
    </location>
</feature>
<feature type="region of interest" description="Disordered" evidence="4">
    <location>
        <begin position="35"/>
        <end position="54"/>
    </location>
</feature>
<feature type="region of interest" description="Disordered" evidence="4">
    <location>
        <begin position="69"/>
        <end position="99"/>
    </location>
</feature>
<sequence length="300" mass="33019">MGRAREVGWMAAGLMIGAGACYCVYKLTIGRDDSEKLEEEGEEEWDDDQELDEEEPDIWFDFETMARPWTEDGDWTEPGAPGGTEDRPSGGGKANRAHPIKQRPFPYEHKNTWSAQNCKNGSCVLDLSKCLFIQGKLLFAEPKDAGFPFSQDINSHLASLSMARNTSPTPDPTVREALCAPDNLNASIESQGQIKMYINEVCRETVSRCCNSFLQQAGLNLLISMTVINNMLAKSASDLKFPLISEGSGCAKVQVLKPLMGLSEKPVLAGELVGAQMLFSFMSLFIRNGNREILLETPAP</sequence>
<keyword id="KW-0472">Membrane</keyword>
<keyword id="KW-0496">Mitochondrion</keyword>
<keyword id="KW-1000">Mitochondrion outer membrane</keyword>
<keyword id="KW-1267">Proteomics identification</keyword>
<keyword id="KW-1185">Reference proteome</keyword>
<keyword id="KW-0735">Signal-anchor</keyword>
<keyword id="KW-0812">Transmembrane</keyword>
<keyword id="KW-1133">Transmembrane helix</keyword>
<comment type="function">
    <text evidence="2">May regulate the dynamics and distribution of mitochondria in neural cells.</text>
</comment>
<comment type="subcellular location">
    <subcellularLocation>
        <location evidence="2">Mitochondrion</location>
    </subcellularLocation>
    <subcellularLocation>
        <location evidence="1">Mitochondrion outer membrane</location>
        <topology evidence="3">Single-pass membrane protein</topology>
    </subcellularLocation>
</comment>
<comment type="similarity">
    <text evidence="5">Belongs to the eutherian X-chromosome-specific Armcx family.</text>
</comment>
<comment type="sequence caution" evidence="5">
    <conflict type="erroneous initiation">
        <sequence resource="EMBL-CDS" id="BAA91387"/>
    </conflict>
</comment>
<evidence type="ECO:0000250" key="1">
    <source>
        <dbReference type="UniProtKB" id="Q8BHS6"/>
    </source>
</evidence>
<evidence type="ECO:0000250" key="2">
    <source>
        <dbReference type="UniProtKB" id="Q8K3A6"/>
    </source>
</evidence>
<evidence type="ECO:0000255" key="3"/>
<evidence type="ECO:0000256" key="4">
    <source>
        <dbReference type="SAM" id="MobiDB-lite"/>
    </source>
</evidence>
<evidence type="ECO:0000305" key="5"/>
<organism>
    <name type="scientific">Homo sapiens</name>
    <name type="common">Human</name>
    <dbReference type="NCBI Taxonomy" id="9606"/>
    <lineage>
        <taxon>Eukaryota</taxon>
        <taxon>Metazoa</taxon>
        <taxon>Chordata</taxon>
        <taxon>Craniata</taxon>
        <taxon>Vertebrata</taxon>
        <taxon>Euteleostomi</taxon>
        <taxon>Mammalia</taxon>
        <taxon>Eutheria</taxon>
        <taxon>Euarchontoglires</taxon>
        <taxon>Primates</taxon>
        <taxon>Haplorrhini</taxon>
        <taxon>Catarrhini</taxon>
        <taxon>Hominidae</taxon>
        <taxon>Homo</taxon>
    </lineage>
</organism>
<proteinExistence type="evidence at protein level"/>
<name>ARMX6_HUMAN</name>
<reference key="1">
    <citation type="journal article" date="2005" name="Nature">
        <title>The DNA sequence of the human X chromosome.</title>
        <authorList>
            <person name="Ross M.T."/>
            <person name="Grafham D.V."/>
            <person name="Coffey A.J."/>
            <person name="Scherer S."/>
            <person name="McLay K."/>
            <person name="Muzny D."/>
            <person name="Platzer M."/>
            <person name="Howell G.R."/>
            <person name="Burrows C."/>
            <person name="Bird C.P."/>
            <person name="Frankish A."/>
            <person name="Lovell F.L."/>
            <person name="Howe K.L."/>
            <person name="Ashurst J.L."/>
            <person name="Fulton R.S."/>
            <person name="Sudbrak R."/>
            <person name="Wen G."/>
            <person name="Jones M.C."/>
            <person name="Hurles M.E."/>
            <person name="Andrews T.D."/>
            <person name="Scott C.E."/>
            <person name="Searle S."/>
            <person name="Ramser J."/>
            <person name="Whittaker A."/>
            <person name="Deadman R."/>
            <person name="Carter N.P."/>
            <person name="Hunt S.E."/>
            <person name="Chen R."/>
            <person name="Cree A."/>
            <person name="Gunaratne P."/>
            <person name="Havlak P."/>
            <person name="Hodgson A."/>
            <person name="Metzker M.L."/>
            <person name="Richards S."/>
            <person name="Scott G."/>
            <person name="Steffen D."/>
            <person name="Sodergren E."/>
            <person name="Wheeler D.A."/>
            <person name="Worley K.C."/>
            <person name="Ainscough R."/>
            <person name="Ambrose K.D."/>
            <person name="Ansari-Lari M.A."/>
            <person name="Aradhya S."/>
            <person name="Ashwell R.I."/>
            <person name="Babbage A.K."/>
            <person name="Bagguley C.L."/>
            <person name="Ballabio A."/>
            <person name="Banerjee R."/>
            <person name="Barker G.E."/>
            <person name="Barlow K.F."/>
            <person name="Barrett I.P."/>
            <person name="Bates K.N."/>
            <person name="Beare D.M."/>
            <person name="Beasley H."/>
            <person name="Beasley O."/>
            <person name="Beck A."/>
            <person name="Bethel G."/>
            <person name="Blechschmidt K."/>
            <person name="Brady N."/>
            <person name="Bray-Allen S."/>
            <person name="Bridgeman A.M."/>
            <person name="Brown A.J."/>
            <person name="Brown M.J."/>
            <person name="Bonnin D."/>
            <person name="Bruford E.A."/>
            <person name="Buhay C."/>
            <person name="Burch P."/>
            <person name="Burford D."/>
            <person name="Burgess J."/>
            <person name="Burrill W."/>
            <person name="Burton J."/>
            <person name="Bye J.M."/>
            <person name="Carder C."/>
            <person name="Carrel L."/>
            <person name="Chako J."/>
            <person name="Chapman J.C."/>
            <person name="Chavez D."/>
            <person name="Chen E."/>
            <person name="Chen G."/>
            <person name="Chen Y."/>
            <person name="Chen Z."/>
            <person name="Chinault C."/>
            <person name="Ciccodicola A."/>
            <person name="Clark S.Y."/>
            <person name="Clarke G."/>
            <person name="Clee C.M."/>
            <person name="Clegg S."/>
            <person name="Clerc-Blankenburg K."/>
            <person name="Clifford K."/>
            <person name="Cobley V."/>
            <person name="Cole C.G."/>
            <person name="Conquer J.S."/>
            <person name="Corby N."/>
            <person name="Connor R.E."/>
            <person name="David R."/>
            <person name="Davies J."/>
            <person name="Davis C."/>
            <person name="Davis J."/>
            <person name="Delgado O."/>
            <person name="Deshazo D."/>
            <person name="Dhami P."/>
            <person name="Ding Y."/>
            <person name="Dinh H."/>
            <person name="Dodsworth S."/>
            <person name="Draper H."/>
            <person name="Dugan-Rocha S."/>
            <person name="Dunham A."/>
            <person name="Dunn M."/>
            <person name="Durbin K.J."/>
            <person name="Dutta I."/>
            <person name="Eades T."/>
            <person name="Ellwood M."/>
            <person name="Emery-Cohen A."/>
            <person name="Errington H."/>
            <person name="Evans K.L."/>
            <person name="Faulkner L."/>
            <person name="Francis F."/>
            <person name="Frankland J."/>
            <person name="Fraser A.E."/>
            <person name="Galgoczy P."/>
            <person name="Gilbert J."/>
            <person name="Gill R."/>
            <person name="Gloeckner G."/>
            <person name="Gregory S.G."/>
            <person name="Gribble S."/>
            <person name="Griffiths C."/>
            <person name="Grocock R."/>
            <person name="Gu Y."/>
            <person name="Gwilliam R."/>
            <person name="Hamilton C."/>
            <person name="Hart E.A."/>
            <person name="Hawes A."/>
            <person name="Heath P.D."/>
            <person name="Heitmann K."/>
            <person name="Hennig S."/>
            <person name="Hernandez J."/>
            <person name="Hinzmann B."/>
            <person name="Ho S."/>
            <person name="Hoffs M."/>
            <person name="Howden P.J."/>
            <person name="Huckle E.J."/>
            <person name="Hume J."/>
            <person name="Hunt P.J."/>
            <person name="Hunt A.R."/>
            <person name="Isherwood J."/>
            <person name="Jacob L."/>
            <person name="Johnson D."/>
            <person name="Jones S."/>
            <person name="de Jong P.J."/>
            <person name="Joseph S.S."/>
            <person name="Keenan S."/>
            <person name="Kelly S."/>
            <person name="Kershaw J.K."/>
            <person name="Khan Z."/>
            <person name="Kioschis P."/>
            <person name="Klages S."/>
            <person name="Knights A.J."/>
            <person name="Kosiura A."/>
            <person name="Kovar-Smith C."/>
            <person name="Laird G.K."/>
            <person name="Langford C."/>
            <person name="Lawlor S."/>
            <person name="Leversha M."/>
            <person name="Lewis L."/>
            <person name="Liu W."/>
            <person name="Lloyd C."/>
            <person name="Lloyd D.M."/>
            <person name="Loulseged H."/>
            <person name="Loveland J.E."/>
            <person name="Lovell J.D."/>
            <person name="Lozado R."/>
            <person name="Lu J."/>
            <person name="Lyne R."/>
            <person name="Ma J."/>
            <person name="Maheshwari M."/>
            <person name="Matthews L.H."/>
            <person name="McDowall J."/>
            <person name="McLaren S."/>
            <person name="McMurray A."/>
            <person name="Meidl P."/>
            <person name="Meitinger T."/>
            <person name="Milne S."/>
            <person name="Miner G."/>
            <person name="Mistry S.L."/>
            <person name="Morgan M."/>
            <person name="Morris S."/>
            <person name="Mueller I."/>
            <person name="Mullikin J.C."/>
            <person name="Nguyen N."/>
            <person name="Nordsiek G."/>
            <person name="Nyakatura G."/>
            <person name="O'dell C.N."/>
            <person name="Okwuonu G."/>
            <person name="Palmer S."/>
            <person name="Pandian R."/>
            <person name="Parker D."/>
            <person name="Parrish J."/>
            <person name="Pasternak S."/>
            <person name="Patel D."/>
            <person name="Pearce A.V."/>
            <person name="Pearson D.M."/>
            <person name="Pelan S.E."/>
            <person name="Perez L."/>
            <person name="Porter K.M."/>
            <person name="Ramsey Y."/>
            <person name="Reichwald K."/>
            <person name="Rhodes S."/>
            <person name="Ridler K.A."/>
            <person name="Schlessinger D."/>
            <person name="Schueler M.G."/>
            <person name="Sehra H.K."/>
            <person name="Shaw-Smith C."/>
            <person name="Shen H."/>
            <person name="Sheridan E.M."/>
            <person name="Shownkeen R."/>
            <person name="Skuce C.D."/>
            <person name="Smith M.L."/>
            <person name="Sotheran E.C."/>
            <person name="Steingruber H.E."/>
            <person name="Steward C.A."/>
            <person name="Storey R."/>
            <person name="Swann R.M."/>
            <person name="Swarbreck D."/>
            <person name="Tabor P.E."/>
            <person name="Taudien S."/>
            <person name="Taylor T."/>
            <person name="Teague B."/>
            <person name="Thomas K."/>
            <person name="Thorpe A."/>
            <person name="Timms K."/>
            <person name="Tracey A."/>
            <person name="Trevanion S."/>
            <person name="Tromans A.C."/>
            <person name="d'Urso M."/>
            <person name="Verduzco D."/>
            <person name="Villasana D."/>
            <person name="Waldron L."/>
            <person name="Wall M."/>
            <person name="Wang Q."/>
            <person name="Warren J."/>
            <person name="Warry G.L."/>
            <person name="Wei X."/>
            <person name="West A."/>
            <person name="Whitehead S.L."/>
            <person name="Whiteley M.N."/>
            <person name="Wilkinson J.E."/>
            <person name="Willey D.L."/>
            <person name="Williams G."/>
            <person name="Williams L."/>
            <person name="Williamson A."/>
            <person name="Williamson H."/>
            <person name="Wilming L."/>
            <person name="Woodmansey R.L."/>
            <person name="Wray P.W."/>
            <person name="Yen J."/>
            <person name="Zhang J."/>
            <person name="Zhou J."/>
            <person name="Zoghbi H."/>
            <person name="Zorilla S."/>
            <person name="Buck D."/>
            <person name="Reinhardt R."/>
            <person name="Poustka A."/>
            <person name="Rosenthal A."/>
            <person name="Lehrach H."/>
            <person name="Meindl A."/>
            <person name="Minx P.J."/>
            <person name="Hillier L.W."/>
            <person name="Willard H.F."/>
            <person name="Wilson R.K."/>
            <person name="Waterston R.H."/>
            <person name="Rice C.M."/>
            <person name="Vaudin M."/>
            <person name="Coulson A."/>
            <person name="Nelson D.L."/>
            <person name="Weinstock G."/>
            <person name="Sulston J.E."/>
            <person name="Durbin R.M."/>
            <person name="Hubbard T."/>
            <person name="Gibbs R.A."/>
            <person name="Beck S."/>
            <person name="Rogers J."/>
            <person name="Bentley D.R."/>
        </authorList>
    </citation>
    <scope>NUCLEOTIDE SEQUENCE [LARGE SCALE GENOMIC DNA]</scope>
</reference>
<reference key="2">
    <citation type="journal article" date="2004" name="Genome Res.">
        <title>The status, quality, and expansion of the NIH full-length cDNA project: the Mammalian Gene Collection (MGC).</title>
        <authorList>
            <consortium name="The MGC Project Team"/>
        </authorList>
    </citation>
    <scope>NUCLEOTIDE SEQUENCE [LARGE SCALE MRNA]</scope>
    <source>
        <tissue>Uterus</tissue>
    </source>
</reference>
<reference key="3">
    <citation type="journal article" date="2004" name="Nat. Genet.">
        <title>Complete sequencing and characterization of 21,243 full-length human cDNAs.</title>
        <authorList>
            <person name="Ota T."/>
            <person name="Suzuki Y."/>
            <person name="Nishikawa T."/>
            <person name="Otsuki T."/>
            <person name="Sugiyama T."/>
            <person name="Irie R."/>
            <person name="Wakamatsu A."/>
            <person name="Hayashi K."/>
            <person name="Sato H."/>
            <person name="Nagai K."/>
            <person name="Kimura K."/>
            <person name="Makita H."/>
            <person name="Sekine M."/>
            <person name="Obayashi M."/>
            <person name="Nishi T."/>
            <person name="Shibahara T."/>
            <person name="Tanaka T."/>
            <person name="Ishii S."/>
            <person name="Yamamoto J."/>
            <person name="Saito K."/>
            <person name="Kawai Y."/>
            <person name="Isono Y."/>
            <person name="Nakamura Y."/>
            <person name="Nagahari K."/>
            <person name="Murakami K."/>
            <person name="Yasuda T."/>
            <person name="Iwayanagi T."/>
            <person name="Wagatsuma M."/>
            <person name="Shiratori A."/>
            <person name="Sudo H."/>
            <person name="Hosoiri T."/>
            <person name="Kaku Y."/>
            <person name="Kodaira H."/>
            <person name="Kondo H."/>
            <person name="Sugawara M."/>
            <person name="Takahashi M."/>
            <person name="Kanda K."/>
            <person name="Yokoi T."/>
            <person name="Furuya T."/>
            <person name="Kikkawa E."/>
            <person name="Omura Y."/>
            <person name="Abe K."/>
            <person name="Kamihara K."/>
            <person name="Katsuta N."/>
            <person name="Sato K."/>
            <person name="Tanikawa M."/>
            <person name="Yamazaki M."/>
            <person name="Ninomiya K."/>
            <person name="Ishibashi T."/>
            <person name="Yamashita H."/>
            <person name="Murakawa K."/>
            <person name="Fujimori K."/>
            <person name="Tanai H."/>
            <person name="Kimata M."/>
            <person name="Watanabe M."/>
            <person name="Hiraoka S."/>
            <person name="Chiba Y."/>
            <person name="Ishida S."/>
            <person name="Ono Y."/>
            <person name="Takiguchi S."/>
            <person name="Watanabe S."/>
            <person name="Yosida M."/>
            <person name="Hotuta T."/>
            <person name="Kusano J."/>
            <person name="Kanehori K."/>
            <person name="Takahashi-Fujii A."/>
            <person name="Hara H."/>
            <person name="Tanase T.-O."/>
            <person name="Nomura Y."/>
            <person name="Togiya S."/>
            <person name="Komai F."/>
            <person name="Hara R."/>
            <person name="Takeuchi K."/>
            <person name="Arita M."/>
            <person name="Imose N."/>
            <person name="Musashino K."/>
            <person name="Yuuki H."/>
            <person name="Oshima A."/>
            <person name="Sasaki N."/>
            <person name="Aotsuka S."/>
            <person name="Yoshikawa Y."/>
            <person name="Matsunawa H."/>
            <person name="Ichihara T."/>
            <person name="Shiohata N."/>
            <person name="Sano S."/>
            <person name="Moriya S."/>
            <person name="Momiyama H."/>
            <person name="Satoh N."/>
            <person name="Takami S."/>
            <person name="Terashima Y."/>
            <person name="Suzuki O."/>
            <person name="Nakagawa S."/>
            <person name="Senoh A."/>
            <person name="Mizoguchi H."/>
            <person name="Goto Y."/>
            <person name="Shimizu F."/>
            <person name="Wakebe H."/>
            <person name="Hishigaki H."/>
            <person name="Watanabe T."/>
            <person name="Sugiyama A."/>
            <person name="Takemoto M."/>
            <person name="Kawakami B."/>
            <person name="Yamazaki M."/>
            <person name="Watanabe K."/>
            <person name="Kumagai A."/>
            <person name="Itakura S."/>
            <person name="Fukuzumi Y."/>
            <person name="Fujimori Y."/>
            <person name="Komiyama M."/>
            <person name="Tashiro H."/>
            <person name="Tanigami A."/>
            <person name="Fujiwara T."/>
            <person name="Ono T."/>
            <person name="Yamada K."/>
            <person name="Fujii Y."/>
            <person name="Ozaki K."/>
            <person name="Hirao M."/>
            <person name="Ohmori Y."/>
            <person name="Kawabata A."/>
            <person name="Hikiji T."/>
            <person name="Kobatake N."/>
            <person name="Inagaki H."/>
            <person name="Ikema Y."/>
            <person name="Okamoto S."/>
            <person name="Okitani R."/>
            <person name="Kawakami T."/>
            <person name="Noguchi S."/>
            <person name="Itoh T."/>
            <person name="Shigeta K."/>
            <person name="Senba T."/>
            <person name="Matsumura K."/>
            <person name="Nakajima Y."/>
            <person name="Mizuno T."/>
            <person name="Morinaga M."/>
            <person name="Sasaki M."/>
            <person name="Togashi T."/>
            <person name="Oyama M."/>
            <person name="Hata H."/>
            <person name="Watanabe M."/>
            <person name="Komatsu T."/>
            <person name="Mizushima-Sugano J."/>
            <person name="Satoh T."/>
            <person name="Shirai Y."/>
            <person name="Takahashi Y."/>
            <person name="Nakagawa K."/>
            <person name="Okumura K."/>
            <person name="Nagase T."/>
            <person name="Nomura N."/>
            <person name="Kikuchi H."/>
            <person name="Masuho Y."/>
            <person name="Yamashita R."/>
            <person name="Nakai K."/>
            <person name="Yada T."/>
            <person name="Nakamura Y."/>
            <person name="Ohara O."/>
            <person name="Isogai T."/>
            <person name="Sugano S."/>
        </authorList>
    </citation>
    <scope>NUCLEOTIDE SEQUENCE [LARGE SCALE MRNA] OF 26-300</scope>
    <source>
        <tissue>Adipose tissue</tissue>
    </source>
</reference>